<accession>P08475</accession>
<sequence length="185" mass="20647">MAAVIAKSSVSAAVARPARSSVRPMAALKPAVKAAPVAAPAQANQMMVWTPVNNKMFETFSYLPPLSDEQIAAQVDYIVANGWIPCLEFAESDKAYVSNESAIRFGSVSCLYYDNRYWTMWKLPMFGCRDPMQVLREIVACTKAFPDAYVRLVAFDNQKQVQIMGFLVQRPKSARDWQPANKRSV</sequence>
<evidence type="ECO:0000255" key="1">
    <source>
        <dbReference type="HAMAP-Rule" id="MF_00860"/>
    </source>
</evidence>
<evidence type="ECO:0000269" key="2">
    <source>
    </source>
</evidence>
<evidence type="ECO:0000305" key="3">
    <source>
    </source>
</evidence>
<evidence type="ECO:0007744" key="4">
    <source>
        <dbReference type="PDB" id="1IR2"/>
    </source>
</evidence>
<evidence type="ECO:0007829" key="5">
    <source>
        <dbReference type="PDB" id="1IR2"/>
    </source>
</evidence>
<evidence type="ECO:0007829" key="6">
    <source>
        <dbReference type="PDB" id="7JSX"/>
    </source>
</evidence>
<gene>
    <name evidence="1" type="primary">RBCS2</name>
    <name type="synonym">RBCS-2</name>
</gene>
<comment type="function">
    <text evidence="1 2">RuBisCO catalyzes two reactions: the carboxylation of D-ribulose 1,5-bisphosphate, the primary event in carbon dioxide fixation, as well as the oxidative fragmentation of the pentose substrate. Both reactions occur simultaneously and in competition at the same active site. Although the small subunit is not catalytic it is essential for maximal activity.</text>
</comment>
<comment type="subunit">
    <text evidence="1 2">Heterohexadecamer of 8 large and 8 small subunits.</text>
</comment>
<comment type="subcellular location">
    <subcellularLocation>
        <location evidence="1 3">Plastid</location>
        <location evidence="1 3">Chloroplast</location>
    </subcellularLocation>
    <subcellularLocation>
        <location evidence="3">Plastid</location>
        <location evidence="3">Chloroplast stroma</location>
    </subcellularLocation>
</comment>
<comment type="miscellaneous">
    <text evidence="1 2">The basic functional RuBisCO is composed of a large chain homodimer in a 'head-to-tail' conformation. In form I RuBisCO this homodimer is arranged in a barrel-like tetramer with the small subunits forming a tetrameric 'cap' on each end of the 'barrel'.</text>
</comment>
<comment type="similarity">
    <text evidence="1">Belongs to the RuBisCO small chain family.</text>
</comment>
<protein>
    <recommendedName>
        <fullName evidence="1">Ribulose bisphosphate carboxylase small subunit, chloroplastic 2</fullName>
        <shortName evidence="1">RuBisCO small subunit 2</shortName>
    </recommendedName>
</protein>
<dbReference type="EMBL" id="X04472">
    <property type="protein sequence ID" value="CAA28160.1"/>
    <property type="molecule type" value="Genomic_DNA"/>
</dbReference>
<dbReference type="PIR" id="B25785">
    <property type="entry name" value="RKKMS2"/>
</dbReference>
<dbReference type="PDB" id="1IR2">
    <property type="method" value="X-ray"/>
    <property type="resolution" value="1.84 A"/>
    <property type="chains" value="1/2/3/4/5/6/7/8/I/J/K/L/M/N/O/P=46-185"/>
</dbReference>
<dbReference type="PDB" id="1UZH">
    <property type="method" value="X-ray"/>
    <property type="resolution" value="2.20 A"/>
    <property type="chains" value="C/F/I/J/M/P/T/W=-"/>
</dbReference>
<dbReference type="PDB" id="7JFO">
    <property type="method" value="EM"/>
    <property type="resolution" value="2.13 A"/>
    <property type="chains" value="B/D/F/H/J/L/N/P=1-185"/>
</dbReference>
<dbReference type="PDB" id="7JN4">
    <property type="method" value="EM"/>
    <property type="resolution" value="2.68 A"/>
    <property type="chains" value="B/D/F/H/J/L/N/P=1-185"/>
</dbReference>
<dbReference type="PDB" id="7JSX">
    <property type="method" value="EM"/>
    <property type="resolution" value="2.06 A"/>
    <property type="chains" value="B/D/F/H/J/L/N/P=1-185"/>
</dbReference>
<dbReference type="PDBsum" id="1IR2"/>
<dbReference type="PDBsum" id="1UZH"/>
<dbReference type="PDBsum" id="7JFO"/>
<dbReference type="PDBsum" id="7JN4"/>
<dbReference type="PDBsum" id="7JSX"/>
<dbReference type="EMDB" id="EMD-22308"/>
<dbReference type="EMDB" id="EMD-22401"/>
<dbReference type="EMDB" id="EMD-22462"/>
<dbReference type="SMR" id="P08475"/>
<dbReference type="iPTMnet" id="P08475"/>
<dbReference type="EnsemblPlants" id="PNW87372">
    <property type="protein sequence ID" value="PNW87372"/>
    <property type="gene ID" value="CHLRE_02g120150v5"/>
</dbReference>
<dbReference type="Gramene" id="PNW87372">
    <property type="protein sequence ID" value="PNW87372"/>
    <property type="gene ID" value="CHLRE_02g120150v5"/>
</dbReference>
<dbReference type="OMA" id="QECRREF"/>
<dbReference type="OrthoDB" id="565292at2759"/>
<dbReference type="BRENDA" id="4.1.1.39">
    <property type="organism ID" value="1318"/>
</dbReference>
<dbReference type="CD-CODE" id="7E3E5BC3">
    <property type="entry name" value="Synthetic Condensate 000358"/>
</dbReference>
<dbReference type="EvolutionaryTrace" id="P08475"/>
<dbReference type="GO" id="GO:0009570">
    <property type="term" value="C:chloroplast stroma"/>
    <property type="evidence" value="ECO:0007669"/>
    <property type="project" value="UniProtKB-SubCell"/>
</dbReference>
<dbReference type="GO" id="GO:0016984">
    <property type="term" value="F:ribulose-bisphosphate carboxylase activity"/>
    <property type="evidence" value="ECO:0007669"/>
    <property type="project" value="UniProtKB-UniRule"/>
</dbReference>
<dbReference type="GO" id="GO:0009853">
    <property type="term" value="P:photorespiration"/>
    <property type="evidence" value="ECO:0007669"/>
    <property type="project" value="UniProtKB-KW"/>
</dbReference>
<dbReference type="GO" id="GO:0019253">
    <property type="term" value="P:reductive pentose-phosphate cycle"/>
    <property type="evidence" value="ECO:0007669"/>
    <property type="project" value="UniProtKB-UniRule"/>
</dbReference>
<dbReference type="CDD" id="cd03527">
    <property type="entry name" value="RuBisCO_small"/>
    <property type="match status" value="1"/>
</dbReference>
<dbReference type="FunFam" id="3.30.190.10:FF:000001">
    <property type="entry name" value="Ribulose bisphosphate carboxylase small chain, chloroplastic"/>
    <property type="match status" value="1"/>
</dbReference>
<dbReference type="Gene3D" id="3.30.190.10">
    <property type="entry name" value="Ribulose bisphosphate carboxylase, small subunit"/>
    <property type="match status" value="1"/>
</dbReference>
<dbReference type="HAMAP" id="MF_00859">
    <property type="entry name" value="RuBisCO_S_bact"/>
    <property type="match status" value="1"/>
</dbReference>
<dbReference type="InterPro" id="IPR024681">
    <property type="entry name" value="RuBisCO_ssu"/>
</dbReference>
<dbReference type="InterPro" id="IPR000894">
    <property type="entry name" value="RuBisCO_ssu_dom"/>
</dbReference>
<dbReference type="InterPro" id="IPR036385">
    <property type="entry name" value="RuBisCO_ssu_sf"/>
</dbReference>
<dbReference type="PANTHER" id="PTHR31262">
    <property type="entry name" value="RIBULOSE BISPHOSPHATE CARBOXYLASE SMALL CHAIN 1, CHLOROPLASTIC"/>
    <property type="match status" value="1"/>
</dbReference>
<dbReference type="PANTHER" id="PTHR31262:SF0">
    <property type="entry name" value="RIBULOSE BISPHOSPHATE CARBOXYLASE SMALL SUBUNIT, CHLOROPLASTIC 1"/>
    <property type="match status" value="1"/>
</dbReference>
<dbReference type="Pfam" id="PF00101">
    <property type="entry name" value="RuBisCO_small"/>
    <property type="match status" value="1"/>
</dbReference>
<dbReference type="PRINTS" id="PR00152">
    <property type="entry name" value="RUBISCOSMALL"/>
</dbReference>
<dbReference type="SMART" id="SM00961">
    <property type="entry name" value="RuBisCO_small"/>
    <property type="match status" value="1"/>
</dbReference>
<dbReference type="SUPFAM" id="SSF55239">
    <property type="entry name" value="RuBisCO, small subunit"/>
    <property type="match status" value="1"/>
</dbReference>
<reference key="1">
    <citation type="journal article" date="1986" name="J. Mol. Biol.">
        <title>Sequence, evolution and differential expression of the two genes encoding variant small subunits of ribulose bisphosphate carboxylase/oxygenase in Chlamydomonas reinhardtii.</title>
        <authorList>
            <person name="Goldschmidt-Clermont M."/>
            <person name="Rahire M."/>
        </authorList>
    </citation>
    <scope>NUCLEOTIDE SEQUENCE [GENOMIC DNA]</scope>
</reference>
<reference key="2">
    <citation type="journal article" date="1993" name="Eur. J. Biochem.">
        <title>Partial purification and properties of enzymes involved in the processing of a chloroplast import protein from Chlamydomonas reinhardii.</title>
        <authorList>
            <person name="Su Q."/>
            <person name="Boschetti A."/>
        </authorList>
    </citation>
    <scope>PROTEIN SEQUENCE OF 25-60</scope>
</reference>
<reference evidence="4" key="3">
    <citation type="journal article" date="2002" name="J. Mol. Biol.">
        <title>Crystal structure of activated ribulose-1,5-bisphosphate carboxylase/oxygenase from green alga Chlamydomonas reinhardtii complexed with 2-carboxyarabinitol-1,5-bisphosphate.</title>
        <authorList>
            <person name="Mizohata E."/>
            <person name="Matsumura H."/>
            <person name="Okano Y."/>
            <person name="Kumei M."/>
            <person name="Takuma H."/>
            <person name="Onodera J."/>
            <person name="Kato K."/>
            <person name="Shibata N."/>
            <person name="Inoue T."/>
            <person name="Yokota A."/>
            <person name="Kai Y."/>
        </authorList>
    </citation>
    <scope>X-RAY CRYSTALLOGRAPHY (1.8 ANGSTROMS) OF 46-185 OF ACTIVATED HOLOENZYME IN COMPLEX WITH THE TRANSITION-STATE ANALOG 2-CABP</scope>
    <scope>FUNCTION</scope>
    <scope>SUBUNIT</scope>
    <scope>SUBCELLULAR LOCATION</scope>
    <scope>METHYLATION AT MET-46</scope>
    <source>
        <strain>137c / CC-125</strain>
    </source>
</reference>
<keyword id="KW-0002">3D-structure</keyword>
<keyword id="KW-0113">Calvin cycle</keyword>
<keyword id="KW-0120">Carbon dioxide fixation</keyword>
<keyword id="KW-0150">Chloroplast</keyword>
<keyword id="KW-0903">Direct protein sequencing</keyword>
<keyword id="KW-0488">Methylation</keyword>
<keyword id="KW-0601">Photorespiration</keyword>
<keyword id="KW-0602">Photosynthesis</keyword>
<keyword id="KW-0934">Plastid</keyword>
<keyword id="KW-0809">Transit peptide</keyword>
<feature type="transit peptide" description="Chloroplast" evidence="2">
    <location>
        <begin position="1"/>
        <end position="45"/>
    </location>
</feature>
<feature type="chain" id="PRO_0000031473" description="Ribulose bisphosphate carboxylase small subunit, chloroplastic 2" evidence="1">
    <location>
        <begin position="46"/>
        <end position="185"/>
    </location>
</feature>
<feature type="modified residue" description="N-methylmethionine" evidence="2">
    <location>
        <position position="46"/>
    </location>
</feature>
<feature type="turn" evidence="5">
    <location>
        <begin position="59"/>
        <end position="62"/>
    </location>
</feature>
<feature type="helix" evidence="5">
    <location>
        <begin position="68"/>
        <end position="80"/>
    </location>
</feature>
<feature type="strand" evidence="5">
    <location>
        <begin position="84"/>
        <end position="90"/>
    </location>
</feature>
<feature type="helix" evidence="5">
    <location>
        <begin position="92"/>
        <end position="94"/>
    </location>
</feature>
<feature type="helix" evidence="5">
    <location>
        <begin position="100"/>
        <end position="104"/>
    </location>
</feature>
<feature type="strand" evidence="6">
    <location>
        <begin position="119"/>
        <end position="122"/>
    </location>
</feature>
<feature type="helix" evidence="5">
    <location>
        <begin position="131"/>
        <end position="144"/>
    </location>
</feature>
<feature type="strand" evidence="5">
    <location>
        <begin position="148"/>
        <end position="156"/>
    </location>
</feature>
<feature type="turn" evidence="5">
    <location>
        <begin position="157"/>
        <end position="160"/>
    </location>
</feature>
<feature type="strand" evidence="5">
    <location>
        <begin position="161"/>
        <end position="169"/>
    </location>
</feature>
<feature type="helix" evidence="5">
    <location>
        <begin position="180"/>
        <end position="182"/>
    </location>
</feature>
<proteinExistence type="evidence at protein level"/>
<name>RBS2_CHLRE</name>
<organism>
    <name type="scientific">Chlamydomonas reinhardtii</name>
    <name type="common">Chlamydomonas smithii</name>
    <dbReference type="NCBI Taxonomy" id="3055"/>
    <lineage>
        <taxon>Eukaryota</taxon>
        <taxon>Viridiplantae</taxon>
        <taxon>Chlorophyta</taxon>
        <taxon>core chlorophytes</taxon>
        <taxon>Chlorophyceae</taxon>
        <taxon>CS clade</taxon>
        <taxon>Chlamydomonadales</taxon>
        <taxon>Chlamydomonadaceae</taxon>
        <taxon>Chlamydomonas</taxon>
    </lineage>
</organism>